<name>THIM_LIMRD</name>
<organism>
    <name type="scientific">Limosilactobacillus reuteri (strain DSM 20016)</name>
    <name type="common">Lactobacillus reuteri</name>
    <dbReference type="NCBI Taxonomy" id="557436"/>
    <lineage>
        <taxon>Bacteria</taxon>
        <taxon>Bacillati</taxon>
        <taxon>Bacillota</taxon>
        <taxon>Bacilli</taxon>
        <taxon>Lactobacillales</taxon>
        <taxon>Lactobacillaceae</taxon>
        <taxon>Limosilactobacillus</taxon>
    </lineage>
</organism>
<keyword id="KW-0067">ATP-binding</keyword>
<keyword id="KW-0418">Kinase</keyword>
<keyword id="KW-0460">Magnesium</keyword>
<keyword id="KW-0479">Metal-binding</keyword>
<keyword id="KW-0547">Nucleotide-binding</keyword>
<keyword id="KW-1185">Reference proteome</keyword>
<keyword id="KW-0784">Thiamine biosynthesis</keyword>
<keyword id="KW-0808">Transferase</keyword>
<accession>A5VK99</accession>
<proteinExistence type="inferred from homology"/>
<protein>
    <recommendedName>
        <fullName evidence="1">Hydroxyethylthiazole kinase</fullName>
        <ecNumber evidence="1">2.7.1.50</ecNumber>
    </recommendedName>
    <alternativeName>
        <fullName evidence="1">4-methyl-5-beta-hydroxyethylthiazole kinase</fullName>
        <shortName evidence="1">TH kinase</shortName>
        <shortName evidence="1">Thz kinase</shortName>
    </alternativeName>
</protein>
<feature type="chain" id="PRO_0000383872" description="Hydroxyethylthiazole kinase">
    <location>
        <begin position="1"/>
        <end position="269"/>
    </location>
</feature>
<feature type="binding site" evidence="1">
    <location>
        <position position="46"/>
    </location>
    <ligand>
        <name>substrate</name>
    </ligand>
</feature>
<feature type="binding site" evidence="1">
    <location>
        <position position="121"/>
    </location>
    <ligand>
        <name>ATP</name>
        <dbReference type="ChEBI" id="CHEBI:30616"/>
    </ligand>
</feature>
<feature type="binding site" evidence="1">
    <location>
        <position position="166"/>
    </location>
    <ligand>
        <name>ATP</name>
        <dbReference type="ChEBI" id="CHEBI:30616"/>
    </ligand>
</feature>
<feature type="binding site" evidence="1">
    <location>
        <position position="193"/>
    </location>
    <ligand>
        <name>substrate</name>
    </ligand>
</feature>
<comment type="function">
    <text evidence="1">Catalyzes the phosphorylation of the hydroxyl group of 4-methyl-5-beta-hydroxyethylthiazole (THZ).</text>
</comment>
<comment type="catalytic activity">
    <reaction evidence="1">
        <text>5-(2-hydroxyethyl)-4-methylthiazole + ATP = 4-methyl-5-(2-phosphooxyethyl)-thiazole + ADP + H(+)</text>
        <dbReference type="Rhea" id="RHEA:24212"/>
        <dbReference type="ChEBI" id="CHEBI:15378"/>
        <dbReference type="ChEBI" id="CHEBI:17957"/>
        <dbReference type="ChEBI" id="CHEBI:30616"/>
        <dbReference type="ChEBI" id="CHEBI:58296"/>
        <dbReference type="ChEBI" id="CHEBI:456216"/>
        <dbReference type="EC" id="2.7.1.50"/>
    </reaction>
</comment>
<comment type="cofactor">
    <cofactor evidence="1">
        <name>Mg(2+)</name>
        <dbReference type="ChEBI" id="CHEBI:18420"/>
    </cofactor>
</comment>
<comment type="pathway">
    <text evidence="1">Cofactor biosynthesis; thiamine diphosphate biosynthesis; 4-methyl-5-(2-phosphoethyl)-thiazole from 5-(2-hydroxyethyl)-4-methylthiazole: step 1/1.</text>
</comment>
<comment type="similarity">
    <text evidence="1">Belongs to the Thz kinase family.</text>
</comment>
<gene>
    <name evidence="1" type="primary">thiM</name>
    <name type="ordered locus">Lreu_1013</name>
</gene>
<dbReference type="EC" id="2.7.1.50" evidence="1"/>
<dbReference type="EMBL" id="CP000705">
    <property type="protein sequence ID" value="ABQ83273.1"/>
    <property type="molecule type" value="Genomic_DNA"/>
</dbReference>
<dbReference type="RefSeq" id="WP_003667689.1">
    <property type="nucleotide sequence ID" value="NC_009513.1"/>
</dbReference>
<dbReference type="SMR" id="A5VK99"/>
<dbReference type="STRING" id="557436.Lreu_1013"/>
<dbReference type="KEGG" id="lre:Lreu_1013"/>
<dbReference type="PATRIC" id="fig|557436.17.peg.1278"/>
<dbReference type="eggNOG" id="COG2145">
    <property type="taxonomic scope" value="Bacteria"/>
</dbReference>
<dbReference type="HOGENOM" id="CLU_019943_0_0_9"/>
<dbReference type="OMA" id="KRPLVHN"/>
<dbReference type="UniPathway" id="UPA00060">
    <property type="reaction ID" value="UER00139"/>
</dbReference>
<dbReference type="Proteomes" id="UP000001991">
    <property type="component" value="Chromosome"/>
</dbReference>
<dbReference type="GO" id="GO:0005524">
    <property type="term" value="F:ATP binding"/>
    <property type="evidence" value="ECO:0007669"/>
    <property type="project" value="UniProtKB-UniRule"/>
</dbReference>
<dbReference type="GO" id="GO:0004417">
    <property type="term" value="F:hydroxyethylthiazole kinase activity"/>
    <property type="evidence" value="ECO:0007669"/>
    <property type="project" value="UniProtKB-UniRule"/>
</dbReference>
<dbReference type="GO" id="GO:0000287">
    <property type="term" value="F:magnesium ion binding"/>
    <property type="evidence" value="ECO:0007669"/>
    <property type="project" value="UniProtKB-UniRule"/>
</dbReference>
<dbReference type="GO" id="GO:0009228">
    <property type="term" value="P:thiamine biosynthetic process"/>
    <property type="evidence" value="ECO:0007669"/>
    <property type="project" value="UniProtKB-KW"/>
</dbReference>
<dbReference type="GO" id="GO:0009229">
    <property type="term" value="P:thiamine diphosphate biosynthetic process"/>
    <property type="evidence" value="ECO:0007669"/>
    <property type="project" value="UniProtKB-UniRule"/>
</dbReference>
<dbReference type="CDD" id="cd01170">
    <property type="entry name" value="THZ_kinase"/>
    <property type="match status" value="1"/>
</dbReference>
<dbReference type="Gene3D" id="3.40.1190.20">
    <property type="match status" value="1"/>
</dbReference>
<dbReference type="HAMAP" id="MF_00228">
    <property type="entry name" value="Thz_kinase"/>
    <property type="match status" value="1"/>
</dbReference>
<dbReference type="InterPro" id="IPR000417">
    <property type="entry name" value="Hyethyz_kinase"/>
</dbReference>
<dbReference type="InterPro" id="IPR029056">
    <property type="entry name" value="Ribokinase-like"/>
</dbReference>
<dbReference type="NCBIfam" id="NF006830">
    <property type="entry name" value="PRK09355.1"/>
    <property type="match status" value="1"/>
</dbReference>
<dbReference type="Pfam" id="PF02110">
    <property type="entry name" value="HK"/>
    <property type="match status" value="1"/>
</dbReference>
<dbReference type="PIRSF" id="PIRSF000513">
    <property type="entry name" value="Thz_kinase"/>
    <property type="match status" value="1"/>
</dbReference>
<dbReference type="PRINTS" id="PR01099">
    <property type="entry name" value="HYETHTZKNASE"/>
</dbReference>
<dbReference type="SUPFAM" id="SSF53613">
    <property type="entry name" value="Ribokinase-like"/>
    <property type="match status" value="1"/>
</dbReference>
<sequence length="269" mass="29028">MVQRQINWSLIDRVRAKNPIVLNLANLVTIDKVADAVSAVGASPIMSVEPAEADEMVMLANALSINLGTINEHQATQIRTVLRAATPLKPLVLDPVAVSAVPSRLKFAHSLLNDFHFDVIRGNASEIAALVEADNTSHGIDAGKVPNQVQIAETCARRYHSIVVLTGETDIITDGQVVYENPFSAEMLTMNVGSGDMLSSIIAAFLGITTNTWDACIVATVLVSAAGVLANRYSVGLGSWQVQFFDQLSIMDTKALLEFFDESEEDYLD</sequence>
<evidence type="ECO:0000255" key="1">
    <source>
        <dbReference type="HAMAP-Rule" id="MF_00228"/>
    </source>
</evidence>
<reference key="1">
    <citation type="journal article" date="2011" name="PLoS Genet.">
        <title>The evolution of host specialization in the vertebrate gut symbiont Lactobacillus reuteri.</title>
        <authorList>
            <person name="Frese S.A."/>
            <person name="Benson A.K."/>
            <person name="Tannock G.W."/>
            <person name="Loach D.M."/>
            <person name="Kim J."/>
            <person name="Zhang M."/>
            <person name="Oh P.L."/>
            <person name="Heng N.C."/>
            <person name="Patil P.B."/>
            <person name="Juge N."/>
            <person name="Mackenzie D.A."/>
            <person name="Pearson B.M."/>
            <person name="Lapidus A."/>
            <person name="Dalin E."/>
            <person name="Tice H."/>
            <person name="Goltsman E."/>
            <person name="Land M."/>
            <person name="Hauser L."/>
            <person name="Ivanova N."/>
            <person name="Kyrpides N.C."/>
            <person name="Walter J."/>
        </authorList>
    </citation>
    <scope>NUCLEOTIDE SEQUENCE [LARGE SCALE GENOMIC DNA]</scope>
    <source>
        <strain>DSM 20016</strain>
    </source>
</reference>